<feature type="signal peptide" evidence="2">
    <location>
        <begin position="1"/>
        <end position="24"/>
    </location>
</feature>
<feature type="chain" id="PRO_0000033287" description="Translocon-associated protein subunit alpha">
    <location>
        <begin position="25"/>
        <end position="258"/>
    </location>
</feature>
<feature type="topological domain" description="Lumenal" evidence="2">
    <location>
        <begin position="25"/>
        <end position="190"/>
    </location>
</feature>
<feature type="transmembrane region" description="Helical" evidence="2">
    <location>
        <begin position="191"/>
        <end position="209"/>
    </location>
</feature>
<feature type="topological domain" description="Cytoplasmic" evidence="2">
    <location>
        <begin position="210"/>
        <end position="258"/>
    </location>
</feature>
<feature type="glycosylation site" description="N-linked (GlcNAc...) asparagine" evidence="2">
    <location>
        <position position="57"/>
    </location>
</feature>
<feature type="glycosylation site" description="N-linked (GlcNAc...) asparagine" evidence="2">
    <location>
        <position position="119"/>
    </location>
</feature>
<feature type="glycosylation site" description="N-linked (GlcNAc...) asparagine" evidence="2">
    <location>
        <position position="127"/>
    </location>
</feature>
<gene>
    <name type="ordered locus">At2g21160</name>
    <name type="ORF">F26H11.8</name>
</gene>
<reference key="1">
    <citation type="journal article" date="1999" name="Nature">
        <title>Sequence and analysis of chromosome 2 of the plant Arabidopsis thaliana.</title>
        <authorList>
            <person name="Lin X."/>
            <person name="Kaul S."/>
            <person name="Rounsley S.D."/>
            <person name="Shea T.P."/>
            <person name="Benito M.-I."/>
            <person name="Town C.D."/>
            <person name="Fujii C.Y."/>
            <person name="Mason T.M."/>
            <person name="Bowman C.L."/>
            <person name="Barnstead M.E."/>
            <person name="Feldblyum T.V."/>
            <person name="Buell C.R."/>
            <person name="Ketchum K.A."/>
            <person name="Lee J.J."/>
            <person name="Ronning C.M."/>
            <person name="Koo H.L."/>
            <person name="Moffat K.S."/>
            <person name="Cronin L.A."/>
            <person name="Shen M."/>
            <person name="Pai G."/>
            <person name="Van Aken S."/>
            <person name="Umayam L."/>
            <person name="Tallon L.J."/>
            <person name="Gill J.E."/>
            <person name="Adams M.D."/>
            <person name="Carrera A.J."/>
            <person name="Creasy T.H."/>
            <person name="Goodman H.M."/>
            <person name="Somerville C.R."/>
            <person name="Copenhaver G.P."/>
            <person name="Preuss D."/>
            <person name="Nierman W.C."/>
            <person name="White O."/>
            <person name="Eisen J.A."/>
            <person name="Salzberg S.L."/>
            <person name="Fraser C.M."/>
            <person name="Venter J.C."/>
        </authorList>
    </citation>
    <scope>NUCLEOTIDE SEQUENCE [LARGE SCALE GENOMIC DNA]</scope>
    <source>
        <strain>cv. Columbia</strain>
    </source>
</reference>
<reference key="2">
    <citation type="journal article" date="2017" name="Plant J.">
        <title>Araport11: a complete reannotation of the Arabidopsis thaliana reference genome.</title>
        <authorList>
            <person name="Cheng C.Y."/>
            <person name="Krishnakumar V."/>
            <person name="Chan A.P."/>
            <person name="Thibaud-Nissen F."/>
            <person name="Schobel S."/>
            <person name="Town C.D."/>
        </authorList>
    </citation>
    <scope>GENOME REANNOTATION</scope>
    <source>
        <strain>cv. Columbia</strain>
    </source>
</reference>
<reference key="3">
    <citation type="journal article" date="2003" name="Science">
        <title>Empirical analysis of transcriptional activity in the Arabidopsis genome.</title>
        <authorList>
            <person name="Yamada K."/>
            <person name="Lim J."/>
            <person name="Dale J.M."/>
            <person name="Chen H."/>
            <person name="Shinn P."/>
            <person name="Palm C.J."/>
            <person name="Southwick A.M."/>
            <person name="Wu H.C."/>
            <person name="Kim C.J."/>
            <person name="Nguyen M."/>
            <person name="Pham P.K."/>
            <person name="Cheuk R.F."/>
            <person name="Karlin-Newmann G."/>
            <person name="Liu S.X."/>
            <person name="Lam B."/>
            <person name="Sakano H."/>
            <person name="Wu T."/>
            <person name="Yu G."/>
            <person name="Miranda M."/>
            <person name="Quach H.L."/>
            <person name="Tripp M."/>
            <person name="Chang C.H."/>
            <person name="Lee J.M."/>
            <person name="Toriumi M.J."/>
            <person name="Chan M.M."/>
            <person name="Tang C.C."/>
            <person name="Onodera C.S."/>
            <person name="Deng J.M."/>
            <person name="Akiyama K."/>
            <person name="Ansari Y."/>
            <person name="Arakawa T."/>
            <person name="Banh J."/>
            <person name="Banno F."/>
            <person name="Bowser L."/>
            <person name="Brooks S.Y."/>
            <person name="Carninci P."/>
            <person name="Chao Q."/>
            <person name="Choy N."/>
            <person name="Enju A."/>
            <person name="Goldsmith A.D."/>
            <person name="Gurjal M."/>
            <person name="Hansen N.F."/>
            <person name="Hayashizaki Y."/>
            <person name="Johnson-Hopson C."/>
            <person name="Hsuan V.W."/>
            <person name="Iida K."/>
            <person name="Karnes M."/>
            <person name="Khan S."/>
            <person name="Koesema E."/>
            <person name="Ishida J."/>
            <person name="Jiang P.X."/>
            <person name="Jones T."/>
            <person name="Kawai J."/>
            <person name="Kamiya A."/>
            <person name="Meyers C."/>
            <person name="Nakajima M."/>
            <person name="Narusaka M."/>
            <person name="Seki M."/>
            <person name="Sakurai T."/>
            <person name="Satou M."/>
            <person name="Tamse R."/>
            <person name="Vaysberg M."/>
            <person name="Wallender E.K."/>
            <person name="Wong C."/>
            <person name="Yamamura Y."/>
            <person name="Yuan S."/>
            <person name="Shinozaki K."/>
            <person name="Davis R.W."/>
            <person name="Theologis A."/>
            <person name="Ecker J.R."/>
        </authorList>
    </citation>
    <scope>NUCLEOTIDE SEQUENCE [LARGE SCALE MRNA]</scope>
    <source>
        <strain>cv. Columbia</strain>
    </source>
</reference>
<reference key="4">
    <citation type="journal article" date="1994" name="FEBS Lett.">
        <title>The N-terminal region of the alpha-subunit of the TRAP complex has a conserved cluster of negative charges.</title>
        <authorList>
            <person name="Hartmann E."/>
            <person name="Prehn S."/>
        </authorList>
    </citation>
    <scope>NUCLEOTIDE SEQUENCE [MRNA] OF 6-258</scope>
</reference>
<sequence length="258" mass="28167">MMNLRVLFLALLLLASPLLQVARCQSDAEDHSSLVDDVVGENTDDAVEEDDHDLDMNLSSFPGVETVCVFPKNSAKLVPAGEETELLVGLKNEGKTRVGVMGIRASVHLPYDHKLLVQNLTMLRLNNASIPTSLQATFPYIFAVSQYLQPGAFDLVGYIIYDVEGKPYQSVFYNGTIEVVESGGLLSGESVFLLTLGIGLLLLLGLWAYSQVQRLTKKTKKVSKVEVGTRSTEASLDEWLEGTTLAKTSSGKTKNKKN</sequence>
<accession>P45434</accession>
<accession>Q94A59</accession>
<accession>Q9SKP7</accession>
<keyword id="KW-0025">Alternative splicing</keyword>
<keyword id="KW-0106">Calcium</keyword>
<keyword id="KW-0256">Endoplasmic reticulum</keyword>
<keyword id="KW-0325">Glycoprotein</keyword>
<keyword id="KW-0472">Membrane</keyword>
<keyword id="KW-0597">Phosphoprotein</keyword>
<keyword id="KW-1185">Reference proteome</keyword>
<keyword id="KW-0732">Signal</keyword>
<keyword id="KW-0812">Transmembrane</keyword>
<keyword id="KW-1133">Transmembrane helix</keyword>
<comment type="function">
    <text>TRAP proteins are part of a complex whose function is to bind calcium to the ER membrane and thereby regulate the retention of ER resident proteins. May be involved in the recycling of the translocation apparatus after completion of the translocation process or may function as a membrane-bound chaperone facilitating folding of translocated proteins.</text>
</comment>
<comment type="subunit">
    <text>Heterotetramer of TRAP-alpha, TRAP-beta, TRAP-delta and TRAP-gamma.</text>
</comment>
<comment type="subcellular location">
    <subcellularLocation>
        <location>Endoplasmic reticulum membrane</location>
        <topology>Single-pass type I membrane protein</topology>
    </subcellularLocation>
</comment>
<comment type="alternative products">
    <event type="alternative splicing"/>
    <isoform>
        <id>P45434-1</id>
        <name>1</name>
        <sequence type="displayed"/>
    </isoform>
    <text>A number of isoforms are produced. According to EST sequences.</text>
</comment>
<comment type="domain">
    <text>Shows a remarkable charge distribution with the N-terminus being highly negatively charged, and the cytoplasmic C-terminus positively charged.</text>
</comment>
<comment type="PTM">
    <text evidence="1">Phosphorylated in its cytoplasmic tail.</text>
</comment>
<comment type="miscellaneous">
    <text>Seems to bind calcium.</text>
</comment>
<comment type="similarity">
    <text evidence="3">Belongs to the TRAP-alpha family.</text>
</comment>
<proteinExistence type="evidence at transcript level"/>
<organism>
    <name type="scientific">Arabidopsis thaliana</name>
    <name type="common">Mouse-ear cress</name>
    <dbReference type="NCBI Taxonomy" id="3702"/>
    <lineage>
        <taxon>Eukaryota</taxon>
        <taxon>Viridiplantae</taxon>
        <taxon>Streptophyta</taxon>
        <taxon>Embryophyta</taxon>
        <taxon>Tracheophyta</taxon>
        <taxon>Spermatophyta</taxon>
        <taxon>Magnoliopsida</taxon>
        <taxon>eudicotyledons</taxon>
        <taxon>Gunneridae</taxon>
        <taxon>Pentapetalae</taxon>
        <taxon>rosids</taxon>
        <taxon>malvids</taxon>
        <taxon>Brassicales</taxon>
        <taxon>Brassicaceae</taxon>
        <taxon>Camelineae</taxon>
        <taxon>Arabidopsis</taxon>
    </lineage>
</organism>
<protein>
    <recommendedName>
        <fullName>Translocon-associated protein subunit alpha</fullName>
        <shortName>TRAP-alpha</shortName>
    </recommendedName>
    <alternativeName>
        <fullName>Signal sequence receptor subunit alpha</fullName>
        <shortName>SSR-alpha</shortName>
    </alternativeName>
</protein>
<evidence type="ECO:0000250" key="1"/>
<evidence type="ECO:0000255" key="2"/>
<evidence type="ECO:0000305" key="3"/>
<name>SSRA_ARATH</name>
<dbReference type="EMBL" id="AC006264">
    <property type="protein sequence ID" value="AAD29800.2"/>
    <property type="molecule type" value="Genomic_DNA"/>
</dbReference>
<dbReference type="EMBL" id="CP002685">
    <property type="protein sequence ID" value="AEC07129.1"/>
    <property type="molecule type" value="Genomic_DNA"/>
</dbReference>
<dbReference type="EMBL" id="AY050351">
    <property type="protein sequence ID" value="AAK91368.1"/>
    <property type="molecule type" value="mRNA"/>
</dbReference>
<dbReference type="EMBL" id="L32016">
    <property type="protein sequence ID" value="AAA21820.1"/>
    <property type="molecule type" value="mRNA"/>
</dbReference>
<dbReference type="PIR" id="H84597">
    <property type="entry name" value="H84597"/>
</dbReference>
<dbReference type="RefSeq" id="NP_565498.1">
    <molecule id="P45434-1"/>
    <property type="nucleotide sequence ID" value="NM_127686.4"/>
</dbReference>
<dbReference type="SMR" id="P45434"/>
<dbReference type="BioGRID" id="2004">
    <property type="interactions" value="5"/>
</dbReference>
<dbReference type="FunCoup" id="P45434">
    <property type="interactions" value="4196"/>
</dbReference>
<dbReference type="IntAct" id="P45434">
    <property type="interactions" value="2"/>
</dbReference>
<dbReference type="STRING" id="3702.P45434"/>
<dbReference type="GlyGen" id="P45434">
    <property type="glycosylation" value="3 sites"/>
</dbReference>
<dbReference type="SwissPalm" id="P45434"/>
<dbReference type="PaxDb" id="3702-AT2G21160.1"/>
<dbReference type="ProteomicsDB" id="228386">
    <molecule id="P45434-1"/>
</dbReference>
<dbReference type="EnsemblPlants" id="AT2G21160.1">
    <molecule id="P45434-1"/>
    <property type="protein sequence ID" value="AT2G21160.1"/>
    <property type="gene ID" value="AT2G21160"/>
</dbReference>
<dbReference type="GeneID" id="816651"/>
<dbReference type="Gramene" id="AT2G21160.1">
    <molecule id="P45434-1"/>
    <property type="protein sequence ID" value="AT2G21160.1"/>
    <property type="gene ID" value="AT2G21160"/>
</dbReference>
<dbReference type="KEGG" id="ath:AT2G21160"/>
<dbReference type="Araport" id="AT2G21160"/>
<dbReference type="TAIR" id="AT2G21160"/>
<dbReference type="eggNOG" id="KOG1631">
    <property type="taxonomic scope" value="Eukaryota"/>
</dbReference>
<dbReference type="HOGENOM" id="CLU_095145_0_0_1"/>
<dbReference type="InParanoid" id="P45434"/>
<dbReference type="OMA" id="TFPYSFT"/>
<dbReference type="PhylomeDB" id="P45434"/>
<dbReference type="CD-CODE" id="4299E36E">
    <property type="entry name" value="Nucleolus"/>
</dbReference>
<dbReference type="PRO" id="PR:P45434"/>
<dbReference type="Proteomes" id="UP000006548">
    <property type="component" value="Chromosome 2"/>
</dbReference>
<dbReference type="ExpressionAtlas" id="P45434">
    <property type="expression patterns" value="baseline and differential"/>
</dbReference>
<dbReference type="GO" id="GO:0009535">
    <property type="term" value="C:chloroplast thylakoid membrane"/>
    <property type="evidence" value="ECO:0007005"/>
    <property type="project" value="TAIR"/>
</dbReference>
<dbReference type="GO" id="GO:0005783">
    <property type="term" value="C:endoplasmic reticulum"/>
    <property type="evidence" value="ECO:0007005"/>
    <property type="project" value="TAIR"/>
</dbReference>
<dbReference type="GO" id="GO:0005789">
    <property type="term" value="C:endoplasmic reticulum membrane"/>
    <property type="evidence" value="ECO:0007669"/>
    <property type="project" value="UniProtKB-SubCell"/>
</dbReference>
<dbReference type="GO" id="GO:0005794">
    <property type="term" value="C:Golgi apparatus"/>
    <property type="evidence" value="ECO:0007005"/>
    <property type="project" value="TAIR"/>
</dbReference>
<dbReference type="GO" id="GO:0005739">
    <property type="term" value="C:mitochondrion"/>
    <property type="evidence" value="ECO:0007005"/>
    <property type="project" value="TAIR"/>
</dbReference>
<dbReference type="GO" id="GO:0000325">
    <property type="term" value="C:plant-type vacuole"/>
    <property type="evidence" value="ECO:0007005"/>
    <property type="project" value="TAIR"/>
</dbReference>
<dbReference type="GO" id="GO:0005886">
    <property type="term" value="C:plasma membrane"/>
    <property type="evidence" value="ECO:0007005"/>
    <property type="project" value="TAIR"/>
</dbReference>
<dbReference type="GO" id="GO:0005773">
    <property type="term" value="C:vacuole"/>
    <property type="evidence" value="ECO:0007005"/>
    <property type="project" value="TAIR"/>
</dbReference>
<dbReference type="InterPro" id="IPR005595">
    <property type="entry name" value="TRAP_alpha"/>
</dbReference>
<dbReference type="PANTHER" id="PTHR12924:SF0">
    <property type="entry name" value="TRANSLOCON-ASSOCIATED PROTEIN SUBUNIT ALPHA"/>
    <property type="match status" value="1"/>
</dbReference>
<dbReference type="PANTHER" id="PTHR12924">
    <property type="entry name" value="TRANSLOCON-ASSOCIATED PROTEIN, ALPHA SUBUNIT"/>
    <property type="match status" value="1"/>
</dbReference>
<dbReference type="Pfam" id="PF03896">
    <property type="entry name" value="TRAP_alpha"/>
    <property type="match status" value="1"/>
</dbReference>